<organism>
    <name type="scientific">Saccharomyces cerevisiae (strain ATCC 204508 / S288c)</name>
    <name type="common">Baker's yeast</name>
    <dbReference type="NCBI Taxonomy" id="559292"/>
    <lineage>
        <taxon>Eukaryota</taxon>
        <taxon>Fungi</taxon>
        <taxon>Dikarya</taxon>
        <taxon>Ascomycota</taxon>
        <taxon>Saccharomycotina</taxon>
        <taxon>Saccharomycetes</taxon>
        <taxon>Saccharomycetales</taxon>
        <taxon>Saccharomycetaceae</taxon>
        <taxon>Saccharomyces</taxon>
    </lineage>
</organism>
<keyword id="KW-0406">Ion transport</keyword>
<keyword id="KW-0408">Iron</keyword>
<keyword id="KW-0410">Iron transport</keyword>
<keyword id="KW-1017">Isopeptide bond</keyword>
<keyword id="KW-0472">Membrane</keyword>
<keyword id="KW-0597">Phosphoprotein</keyword>
<keyword id="KW-1185">Reference proteome</keyword>
<keyword id="KW-0812">Transmembrane</keyword>
<keyword id="KW-1133">Transmembrane helix</keyword>
<keyword id="KW-0813">Transport</keyword>
<keyword id="KW-0832">Ubl conjugation</keyword>
<dbReference type="EMBL" id="L34837">
    <property type="protein sequence ID" value="AAA53129.1"/>
    <property type="molecule type" value="mRNA"/>
</dbReference>
<dbReference type="EMBL" id="Z54141">
    <property type="protein sequence ID" value="CAA90837.1"/>
    <property type="molecule type" value="Genomic_DNA"/>
</dbReference>
<dbReference type="EMBL" id="BK006946">
    <property type="protein sequence ID" value="DAA10221.1"/>
    <property type="molecule type" value="Genomic_DNA"/>
</dbReference>
<dbReference type="PIR" id="S50313">
    <property type="entry name" value="S50313"/>
</dbReference>
<dbReference type="RefSeq" id="NP_014052.1">
    <property type="nucleotide sequence ID" value="NM_001182832.1"/>
</dbReference>
<dbReference type="BioGRID" id="35499">
    <property type="interactions" value="118"/>
</dbReference>
<dbReference type="DIP" id="DIP-5543N"/>
<dbReference type="FunCoup" id="P40988">
    <property type="interactions" value="331"/>
</dbReference>
<dbReference type="IntAct" id="P40988">
    <property type="interactions" value="20"/>
</dbReference>
<dbReference type="MINT" id="P40988"/>
<dbReference type="STRING" id="4932.YMR319C"/>
<dbReference type="TCDB" id="9.A.9.1.1">
    <property type="family name" value="the low affinity fe(2+) transporter (fet) family"/>
</dbReference>
<dbReference type="iPTMnet" id="P40988"/>
<dbReference type="PaxDb" id="4932-YMR319C"/>
<dbReference type="PeptideAtlas" id="P40988"/>
<dbReference type="EnsemblFungi" id="YMR319C_mRNA">
    <property type="protein sequence ID" value="YMR319C"/>
    <property type="gene ID" value="YMR319C"/>
</dbReference>
<dbReference type="GeneID" id="855369"/>
<dbReference type="KEGG" id="sce:YMR319C"/>
<dbReference type="AGR" id="SGD:S000004938"/>
<dbReference type="SGD" id="S000004938">
    <property type="gene designation" value="FET4"/>
</dbReference>
<dbReference type="VEuPathDB" id="FungiDB:YMR319C"/>
<dbReference type="eggNOG" id="ENOG502QRCK">
    <property type="taxonomic scope" value="Eukaryota"/>
</dbReference>
<dbReference type="HOGENOM" id="CLU_028340_0_0_1"/>
<dbReference type="InParanoid" id="P40988"/>
<dbReference type="OMA" id="WQVVMQD"/>
<dbReference type="OrthoDB" id="2224262at2759"/>
<dbReference type="BioCyc" id="YEAST:G3O-32983-MONOMER"/>
<dbReference type="BioGRID-ORCS" id="855369">
    <property type="hits" value="3 hits in 10 CRISPR screens"/>
</dbReference>
<dbReference type="PRO" id="PR:P40988"/>
<dbReference type="Proteomes" id="UP000002311">
    <property type="component" value="Chromosome XIII"/>
</dbReference>
<dbReference type="RNAct" id="P40988">
    <property type="molecule type" value="protein"/>
</dbReference>
<dbReference type="GO" id="GO:0071944">
    <property type="term" value="C:cell periphery"/>
    <property type="evidence" value="ECO:0007005"/>
    <property type="project" value="SGD"/>
</dbReference>
<dbReference type="GO" id="GO:0000324">
    <property type="term" value="C:fungal-type vacuole"/>
    <property type="evidence" value="ECO:0007005"/>
    <property type="project" value="SGD"/>
</dbReference>
<dbReference type="GO" id="GO:0005886">
    <property type="term" value="C:plasma membrane"/>
    <property type="evidence" value="ECO:0000314"/>
    <property type="project" value="SGD"/>
</dbReference>
<dbReference type="GO" id="GO:0005375">
    <property type="term" value="F:copper ion transmembrane transporter activity"/>
    <property type="evidence" value="ECO:0000314"/>
    <property type="project" value="SGD"/>
</dbReference>
<dbReference type="GO" id="GO:0005381">
    <property type="term" value="F:iron ion transmembrane transporter activity"/>
    <property type="evidence" value="ECO:0000315"/>
    <property type="project" value="SGD"/>
</dbReference>
<dbReference type="GO" id="GO:0015677">
    <property type="term" value="P:copper ion import"/>
    <property type="evidence" value="ECO:0000315"/>
    <property type="project" value="SGD"/>
</dbReference>
<dbReference type="GO" id="GO:0006825">
    <property type="term" value="P:copper ion transport"/>
    <property type="evidence" value="ECO:0000315"/>
    <property type="project" value="SGD"/>
</dbReference>
<dbReference type="GO" id="GO:0034755">
    <property type="term" value="P:iron ion transmembrane transport"/>
    <property type="evidence" value="ECO:0000315"/>
    <property type="project" value="SGD"/>
</dbReference>
<dbReference type="GO" id="GO:0006829">
    <property type="term" value="P:zinc ion transport"/>
    <property type="evidence" value="ECO:0000315"/>
    <property type="project" value="SGD"/>
</dbReference>
<dbReference type="InterPro" id="IPR007251">
    <property type="entry name" value="Iron_permease_Fet4"/>
</dbReference>
<dbReference type="Pfam" id="PF04120">
    <property type="entry name" value="Iron_permease"/>
    <property type="match status" value="2"/>
</dbReference>
<feature type="chain" id="PRO_0000087233" description="Low-affinity Fe(2+) transport protein">
    <location>
        <begin position="1"/>
        <end position="552"/>
    </location>
</feature>
<feature type="topological domain" description="Extracellular" evidence="1">
    <location>
        <begin position="1"/>
        <end position="97"/>
    </location>
</feature>
<feature type="transmembrane region" description="Helical" evidence="1">
    <location>
        <begin position="98"/>
        <end position="118"/>
    </location>
</feature>
<feature type="topological domain" description="Cytoplasmic" evidence="1">
    <location>
        <begin position="119"/>
        <end position="225"/>
    </location>
</feature>
<feature type="transmembrane region" description="Helical" evidence="1">
    <location>
        <begin position="226"/>
        <end position="246"/>
    </location>
</feature>
<feature type="topological domain" description="Extracellular" evidence="1">
    <location>
        <begin position="247"/>
        <end position="271"/>
    </location>
</feature>
<feature type="transmembrane region" description="Helical" evidence="1">
    <location>
        <begin position="272"/>
        <end position="292"/>
    </location>
</feature>
<feature type="topological domain" description="Cytoplasmic" evidence="1">
    <location>
        <begin position="293"/>
        <end position="354"/>
    </location>
</feature>
<feature type="transmembrane region" description="Helical" evidence="1">
    <location>
        <begin position="355"/>
        <end position="375"/>
    </location>
</feature>
<feature type="topological domain" description="Extracellular" evidence="1">
    <location>
        <begin position="376"/>
        <end position="383"/>
    </location>
</feature>
<feature type="transmembrane region" description="Helical" evidence="1">
    <location>
        <begin position="384"/>
        <end position="404"/>
    </location>
</feature>
<feature type="topological domain" description="Cytoplasmic" evidence="1">
    <location>
        <begin position="405"/>
        <end position="465"/>
    </location>
</feature>
<feature type="transmembrane region" description="Helical" evidence="1">
    <location>
        <begin position="466"/>
        <end position="486"/>
    </location>
</feature>
<feature type="topological domain" description="Extracellular" evidence="1">
    <location>
        <begin position="487"/>
        <end position="493"/>
    </location>
</feature>
<feature type="transmembrane region" description="Helical" evidence="1">
    <location>
        <begin position="494"/>
        <end position="514"/>
    </location>
</feature>
<feature type="topological domain" description="Cytoplasmic" evidence="1">
    <location>
        <begin position="515"/>
        <end position="552"/>
    </location>
</feature>
<feature type="modified residue" description="Phosphoserine" evidence="4">
    <location>
        <position position="48"/>
    </location>
</feature>
<feature type="modified residue" description="Phosphoserine" evidence="4">
    <location>
        <position position="50"/>
    </location>
</feature>
<feature type="cross-link" description="Glycyl lysine isopeptide (Lys-Gly) (interchain with G-Cter in ubiquitin)" evidence="5">
    <location>
        <position position="39"/>
    </location>
</feature>
<feature type="sequence conflict" description="In Ref. 1; AAA53129." evidence="3" ref="1">
    <original>V</original>
    <variation>I</variation>
    <location>
        <position position="283"/>
    </location>
</feature>
<feature type="sequence conflict" description="In Ref. 1; AAA53129." evidence="3" ref="1">
    <original>F</original>
    <variation>L</variation>
    <location>
        <position position="441"/>
    </location>
</feature>
<feature type="sequence conflict" description="In Ref. 1; AAA53129." evidence="3" ref="1">
    <original>T</original>
    <variation>I</variation>
    <location>
        <position position="450"/>
    </location>
</feature>
<evidence type="ECO:0000255" key="1"/>
<evidence type="ECO:0000269" key="2">
    <source>
    </source>
</evidence>
<evidence type="ECO:0000305" key="3"/>
<evidence type="ECO:0007744" key="4">
    <source>
    </source>
</evidence>
<evidence type="ECO:0007744" key="5">
    <source>
    </source>
</evidence>
<reference key="1">
    <citation type="journal article" date="1994" name="J. Biol. Chem.">
        <title>The FET4 gene encodes the low affinity Fe(II) transport protein of Saccharomyces cerevisiae.</title>
        <authorList>
            <person name="Dix D.R."/>
            <person name="Bridgham J.T."/>
            <person name="Broderius M.A."/>
            <person name="Byersdorfer C.A."/>
            <person name="Eide D.J."/>
        </authorList>
    </citation>
    <scope>NUCLEOTIDE SEQUENCE [MRNA]</scope>
</reference>
<reference key="2">
    <citation type="journal article" date="1997" name="Nature">
        <title>The nucleotide sequence of Saccharomyces cerevisiae chromosome XIII.</title>
        <authorList>
            <person name="Bowman S."/>
            <person name="Churcher C.M."/>
            <person name="Badcock K."/>
            <person name="Brown D."/>
            <person name="Chillingworth T."/>
            <person name="Connor R."/>
            <person name="Dedman K."/>
            <person name="Devlin K."/>
            <person name="Gentles S."/>
            <person name="Hamlin N."/>
            <person name="Hunt S."/>
            <person name="Jagels K."/>
            <person name="Lye G."/>
            <person name="Moule S."/>
            <person name="Odell C."/>
            <person name="Pearson D."/>
            <person name="Rajandream M.A."/>
            <person name="Rice P."/>
            <person name="Skelton J."/>
            <person name="Walsh S.V."/>
            <person name="Whitehead S."/>
            <person name="Barrell B.G."/>
        </authorList>
    </citation>
    <scope>NUCLEOTIDE SEQUENCE [LARGE SCALE GENOMIC DNA]</scope>
    <source>
        <strain>ATCC 204508 / S288c</strain>
    </source>
</reference>
<reference key="3">
    <citation type="journal article" date="2014" name="G3 (Bethesda)">
        <title>The reference genome sequence of Saccharomyces cerevisiae: Then and now.</title>
        <authorList>
            <person name="Engel S.R."/>
            <person name="Dietrich F.S."/>
            <person name="Fisk D.G."/>
            <person name="Binkley G."/>
            <person name="Balakrishnan R."/>
            <person name="Costanzo M.C."/>
            <person name="Dwight S.S."/>
            <person name="Hitz B.C."/>
            <person name="Karra K."/>
            <person name="Nash R.S."/>
            <person name="Weng S."/>
            <person name="Wong E.D."/>
            <person name="Lloyd P."/>
            <person name="Skrzypek M.S."/>
            <person name="Miyasato S.R."/>
            <person name="Simison M."/>
            <person name="Cherry J.M."/>
        </authorList>
    </citation>
    <scope>GENOME REANNOTATION</scope>
    <source>
        <strain>ATCC 204508 / S288c</strain>
    </source>
</reference>
<reference key="4">
    <citation type="journal article" date="2003" name="Nature">
        <title>Global analysis of protein expression in yeast.</title>
        <authorList>
            <person name="Ghaemmaghami S."/>
            <person name="Huh W.-K."/>
            <person name="Bower K."/>
            <person name="Howson R.W."/>
            <person name="Belle A."/>
            <person name="Dephoure N."/>
            <person name="O'Shea E.K."/>
            <person name="Weissman J.S."/>
        </authorList>
    </citation>
    <scope>LEVEL OF PROTEIN EXPRESSION [LARGE SCALE ANALYSIS]</scope>
</reference>
<reference key="5">
    <citation type="journal article" date="2006" name="Proc. Natl. Acad. Sci. U.S.A.">
        <title>A global topology map of the Saccharomyces cerevisiae membrane proteome.</title>
        <authorList>
            <person name="Kim H."/>
            <person name="Melen K."/>
            <person name="Oesterberg M."/>
            <person name="von Heijne G."/>
        </authorList>
    </citation>
    <scope>TOPOLOGY [LARGE SCALE ANALYSIS]</scope>
    <source>
        <strain>ATCC 208353 / W303-1A</strain>
    </source>
</reference>
<reference key="6">
    <citation type="journal article" date="2009" name="Science">
        <title>Global analysis of Cdk1 substrate phosphorylation sites provides insights into evolution.</title>
        <authorList>
            <person name="Holt L.J."/>
            <person name="Tuch B.B."/>
            <person name="Villen J."/>
            <person name="Johnson A.D."/>
            <person name="Gygi S.P."/>
            <person name="Morgan D.O."/>
        </authorList>
    </citation>
    <scope>PHOSPHORYLATION [LARGE SCALE ANALYSIS] AT SER-48 AND SER-50</scope>
    <scope>IDENTIFICATION BY MASS SPECTROMETRY [LARGE SCALE ANALYSIS]</scope>
</reference>
<reference key="7">
    <citation type="journal article" date="2012" name="Proteomics">
        <title>Sites of ubiquitin attachment in Saccharomyces cerevisiae.</title>
        <authorList>
            <person name="Starita L.M."/>
            <person name="Lo R.S."/>
            <person name="Eng J.K."/>
            <person name="von Haller P.D."/>
            <person name="Fields S."/>
        </authorList>
    </citation>
    <scope>UBIQUITINATION [LARGE SCALE ANALYSIS] AT LYS-39</scope>
    <scope>IDENTIFICATION BY MASS SPECTROMETRY [LARGE SCALE ANALYSIS]</scope>
</reference>
<comment type="function">
    <text>Required for Fe(2+) ion low affinity uptake.</text>
</comment>
<comment type="subcellular location">
    <subcellularLocation>
        <location>Membrane</location>
        <topology>Multi-pass membrane protein</topology>
    </subcellularLocation>
</comment>
<comment type="induction">
    <text>By iron deprivation.</text>
</comment>
<comment type="miscellaneous">
    <text evidence="2">Present with 573 molecules/cell in log phase SD medium.</text>
</comment>
<comment type="similarity">
    <text evidence="3">Belongs to the FET4 family.</text>
</comment>
<protein>
    <recommendedName>
        <fullName>Low-affinity Fe(2+) transport protein</fullName>
    </recommendedName>
    <alternativeName>
        <fullName>Low-affinity Fe(II) transport protein</fullName>
    </alternativeName>
</protein>
<sequence>MGKIAEFLGNPGARPDVHHRAPTVDCKQYEEFGDSNDYKNDDVVRVVSHSDESTDDELCNVNLTETGAIFTSKGFTGLSKGFTDKTLDFLVRVAGSQAVFFIVWIILIIWVVIGIVYNAPFNWQVVMQDGQSIQSYVWDTLLMRQQLMSTHEQILICGRLKSRLASFKNYLTRSTPEEEKADCTVEANEVSSVENHIDPSAINGELPVENWYDRLSNVASRYMGSIAAMVIFWIGIFVWIGCGAIPKDAGNTPPYTGETTGSNPRLKKFSDAWQMYINTAVAVSLLICTTFLQNIRARHDYFTGRFLVDIFDMDEKIDYRIRKHFNDFETPHPVVTIESKKRSTGRKMIDWYADIIGTGIGVLIGVAVFATWIGIGSPMKWDDNWWLIIGTYTGLIGFLDGFVLREVYFRIVQHEEKNYSDVAKEDLELFQELGIECPEEFSGKAPEINTIGYRTSQYINRICSTPWSVLVSVIIIIGLICIASGLRWSTTGQLIANTPTMIIEEFFLLVLLQAHNWADRQRRVEVTALYARRRILLSYVEKRFPEVMMLEK</sequence>
<accession>P40988</accession>
<accession>D6W0E7</accession>
<proteinExistence type="evidence at protein level"/>
<gene>
    <name type="primary">FET4</name>
    <name type="ordered locus">YMR319C</name>
    <name type="ORF">YM9924.11C</name>
</gene>
<name>FET4_YEAST</name>